<organism>
    <name type="scientific">Desulfotalea psychrophila (strain LSv54 / DSM 12343)</name>
    <dbReference type="NCBI Taxonomy" id="177439"/>
    <lineage>
        <taxon>Bacteria</taxon>
        <taxon>Pseudomonadati</taxon>
        <taxon>Thermodesulfobacteriota</taxon>
        <taxon>Desulfobulbia</taxon>
        <taxon>Desulfobulbales</taxon>
        <taxon>Desulfocapsaceae</taxon>
        <taxon>Desulfotalea</taxon>
    </lineage>
</organism>
<sequence>MPNFIEGNLKADGKKFAIIVARFNSFISDKLLDGALDSLVRSGATDSDIDVVRVPGAYEIPLIAKKLAASLKYDAVICLGAVIRGATPHFDVVVNEVSKGSAQVSLETGVPVLFGVLTTETIEQAIERSGTKAGNKGSDVAIAAIEMANLVDALQ</sequence>
<name>RISB_DESPS</name>
<protein>
    <recommendedName>
        <fullName evidence="1">6,7-dimethyl-8-ribityllumazine synthase</fullName>
        <shortName evidence="1">DMRL synthase</shortName>
        <shortName evidence="1">LS</shortName>
        <shortName evidence="1">Lumazine synthase</shortName>
        <ecNumber evidence="1">2.5.1.78</ecNumber>
    </recommendedName>
</protein>
<dbReference type="EC" id="2.5.1.78" evidence="1"/>
<dbReference type="EMBL" id="CR522870">
    <property type="protein sequence ID" value="CAG35830.1"/>
    <property type="molecule type" value="Genomic_DNA"/>
</dbReference>
<dbReference type="RefSeq" id="WP_011188344.1">
    <property type="nucleotide sequence ID" value="NC_006138.1"/>
</dbReference>
<dbReference type="SMR" id="Q6AP94"/>
<dbReference type="STRING" id="177439.DP1101"/>
<dbReference type="KEGG" id="dps:DP1101"/>
<dbReference type="eggNOG" id="COG0054">
    <property type="taxonomic scope" value="Bacteria"/>
</dbReference>
<dbReference type="HOGENOM" id="CLU_089358_1_1_7"/>
<dbReference type="OrthoDB" id="9809709at2"/>
<dbReference type="UniPathway" id="UPA00275">
    <property type="reaction ID" value="UER00404"/>
</dbReference>
<dbReference type="Proteomes" id="UP000000602">
    <property type="component" value="Chromosome"/>
</dbReference>
<dbReference type="GO" id="GO:0005829">
    <property type="term" value="C:cytosol"/>
    <property type="evidence" value="ECO:0007669"/>
    <property type="project" value="TreeGrafter"/>
</dbReference>
<dbReference type="GO" id="GO:0009349">
    <property type="term" value="C:riboflavin synthase complex"/>
    <property type="evidence" value="ECO:0007669"/>
    <property type="project" value="InterPro"/>
</dbReference>
<dbReference type="GO" id="GO:0000906">
    <property type="term" value="F:6,7-dimethyl-8-ribityllumazine synthase activity"/>
    <property type="evidence" value="ECO:0007669"/>
    <property type="project" value="UniProtKB-UniRule"/>
</dbReference>
<dbReference type="GO" id="GO:0009231">
    <property type="term" value="P:riboflavin biosynthetic process"/>
    <property type="evidence" value="ECO:0007669"/>
    <property type="project" value="UniProtKB-UniRule"/>
</dbReference>
<dbReference type="CDD" id="cd09209">
    <property type="entry name" value="Lumazine_synthase-I"/>
    <property type="match status" value="1"/>
</dbReference>
<dbReference type="FunFam" id="3.40.50.960:FF:000001">
    <property type="entry name" value="6,7-dimethyl-8-ribityllumazine synthase"/>
    <property type="match status" value="1"/>
</dbReference>
<dbReference type="Gene3D" id="3.40.50.960">
    <property type="entry name" value="Lumazine/riboflavin synthase"/>
    <property type="match status" value="1"/>
</dbReference>
<dbReference type="HAMAP" id="MF_00178">
    <property type="entry name" value="Lumazine_synth"/>
    <property type="match status" value="1"/>
</dbReference>
<dbReference type="InterPro" id="IPR034964">
    <property type="entry name" value="LS"/>
</dbReference>
<dbReference type="InterPro" id="IPR002180">
    <property type="entry name" value="LS/RS"/>
</dbReference>
<dbReference type="InterPro" id="IPR036467">
    <property type="entry name" value="LS/RS_sf"/>
</dbReference>
<dbReference type="NCBIfam" id="TIGR00114">
    <property type="entry name" value="lumazine-synth"/>
    <property type="match status" value="1"/>
</dbReference>
<dbReference type="NCBIfam" id="NF000812">
    <property type="entry name" value="PRK00061.1-4"/>
    <property type="match status" value="1"/>
</dbReference>
<dbReference type="PANTHER" id="PTHR21058:SF0">
    <property type="entry name" value="6,7-DIMETHYL-8-RIBITYLLUMAZINE SYNTHASE"/>
    <property type="match status" value="1"/>
</dbReference>
<dbReference type="PANTHER" id="PTHR21058">
    <property type="entry name" value="6,7-DIMETHYL-8-RIBITYLLUMAZINE SYNTHASE DMRL SYNTHASE LUMAZINE SYNTHASE"/>
    <property type="match status" value="1"/>
</dbReference>
<dbReference type="Pfam" id="PF00885">
    <property type="entry name" value="DMRL_synthase"/>
    <property type="match status" value="1"/>
</dbReference>
<dbReference type="SUPFAM" id="SSF52121">
    <property type="entry name" value="Lumazine synthase"/>
    <property type="match status" value="1"/>
</dbReference>
<feature type="chain" id="PRO_1000040416" description="6,7-dimethyl-8-ribityllumazine synthase">
    <location>
        <begin position="1"/>
        <end position="155"/>
    </location>
</feature>
<feature type="active site" description="Proton donor" evidence="1">
    <location>
        <position position="89"/>
    </location>
</feature>
<feature type="binding site" evidence="1">
    <location>
        <position position="23"/>
    </location>
    <ligand>
        <name>5-amino-6-(D-ribitylamino)uracil</name>
        <dbReference type="ChEBI" id="CHEBI:15934"/>
    </ligand>
</feature>
<feature type="binding site" evidence="1">
    <location>
        <begin position="57"/>
        <end position="59"/>
    </location>
    <ligand>
        <name>5-amino-6-(D-ribitylamino)uracil</name>
        <dbReference type="ChEBI" id="CHEBI:15934"/>
    </ligand>
</feature>
<feature type="binding site" evidence="1">
    <location>
        <begin position="81"/>
        <end position="83"/>
    </location>
    <ligand>
        <name>5-amino-6-(D-ribitylamino)uracil</name>
        <dbReference type="ChEBI" id="CHEBI:15934"/>
    </ligand>
</feature>
<feature type="binding site" evidence="1">
    <location>
        <begin position="86"/>
        <end position="87"/>
    </location>
    <ligand>
        <name>(2S)-2-hydroxy-3-oxobutyl phosphate</name>
        <dbReference type="ChEBI" id="CHEBI:58830"/>
    </ligand>
</feature>
<feature type="binding site" evidence="1">
    <location>
        <position position="114"/>
    </location>
    <ligand>
        <name>5-amino-6-(D-ribitylamino)uracil</name>
        <dbReference type="ChEBI" id="CHEBI:15934"/>
    </ligand>
</feature>
<feature type="binding site" evidence="1">
    <location>
        <position position="128"/>
    </location>
    <ligand>
        <name>(2S)-2-hydroxy-3-oxobutyl phosphate</name>
        <dbReference type="ChEBI" id="CHEBI:58830"/>
    </ligand>
</feature>
<proteinExistence type="inferred from homology"/>
<gene>
    <name evidence="1" type="primary">ribH</name>
    <name type="ordered locus">DP1101</name>
</gene>
<keyword id="KW-1185">Reference proteome</keyword>
<keyword id="KW-0686">Riboflavin biosynthesis</keyword>
<keyword id="KW-0808">Transferase</keyword>
<accession>Q6AP94</accession>
<evidence type="ECO:0000255" key="1">
    <source>
        <dbReference type="HAMAP-Rule" id="MF_00178"/>
    </source>
</evidence>
<reference key="1">
    <citation type="journal article" date="2004" name="Environ. Microbiol.">
        <title>The genome of Desulfotalea psychrophila, a sulfate-reducing bacterium from permanently cold Arctic sediments.</title>
        <authorList>
            <person name="Rabus R."/>
            <person name="Ruepp A."/>
            <person name="Frickey T."/>
            <person name="Rattei T."/>
            <person name="Fartmann B."/>
            <person name="Stark M."/>
            <person name="Bauer M."/>
            <person name="Zibat A."/>
            <person name="Lombardot T."/>
            <person name="Becker I."/>
            <person name="Amann J."/>
            <person name="Gellner K."/>
            <person name="Teeling H."/>
            <person name="Leuschner W.D."/>
            <person name="Gloeckner F.-O."/>
            <person name="Lupas A.N."/>
            <person name="Amann R."/>
            <person name="Klenk H.-P."/>
        </authorList>
    </citation>
    <scope>NUCLEOTIDE SEQUENCE [LARGE SCALE GENOMIC DNA]</scope>
    <source>
        <strain>DSM 12343 / LSv54</strain>
    </source>
</reference>
<comment type="function">
    <text evidence="1">Catalyzes the formation of 6,7-dimethyl-8-ribityllumazine by condensation of 5-amino-6-(D-ribitylamino)uracil with 3,4-dihydroxy-2-butanone 4-phosphate. This is the penultimate step in the biosynthesis of riboflavin.</text>
</comment>
<comment type="catalytic activity">
    <reaction evidence="1">
        <text>(2S)-2-hydroxy-3-oxobutyl phosphate + 5-amino-6-(D-ribitylamino)uracil = 6,7-dimethyl-8-(1-D-ribityl)lumazine + phosphate + 2 H2O + H(+)</text>
        <dbReference type="Rhea" id="RHEA:26152"/>
        <dbReference type="ChEBI" id="CHEBI:15377"/>
        <dbReference type="ChEBI" id="CHEBI:15378"/>
        <dbReference type="ChEBI" id="CHEBI:15934"/>
        <dbReference type="ChEBI" id="CHEBI:43474"/>
        <dbReference type="ChEBI" id="CHEBI:58201"/>
        <dbReference type="ChEBI" id="CHEBI:58830"/>
        <dbReference type="EC" id="2.5.1.78"/>
    </reaction>
</comment>
<comment type="pathway">
    <text evidence="1">Cofactor biosynthesis; riboflavin biosynthesis; riboflavin from 2-hydroxy-3-oxobutyl phosphate and 5-amino-6-(D-ribitylamino)uracil: step 1/2.</text>
</comment>
<comment type="similarity">
    <text evidence="1">Belongs to the DMRL synthase family.</text>
</comment>